<accession>Q6FVX3</accession>
<sequence>MSDSEVKDVPVAPVEEVEAPVEAPVEAALEPSVEAPVEAPVESTVEAGEPAPERTRKHIESDDDDEEVQAPVEEQVTIDSSEDPKSQRQILEDRLDRLLKKTSGRRQRADEHDLEQYLDEKILRLKDEMNIAAQMDIETLNKRIEEGENKSQDKKPLVAIQKVKLLPKVMSILSKANLADTILDNNLLQSVRIWLEPLPDGSLPSFEIQKSLFAALDDLPIKTEHLKESGLGRVVIFYTKSKRVEPQLARLAEKLIAEWTRPIIGASDNYRDKRIMQLEFDSEKLKRKSALDSAKRKKNKVSKPSSSASKGSSAQTLYEQAAARRNRAAAPAQTTTDYKYAPVSNITSVPTNARTVGVGSSLNNNELYKKLSSRLAKPGKRS</sequence>
<dbReference type="EMBL" id="CR380950">
    <property type="protein sequence ID" value="CAG58532.1"/>
    <property type="molecule type" value="Genomic_DNA"/>
</dbReference>
<dbReference type="RefSeq" id="XP_445621.1">
    <property type="nucleotide sequence ID" value="XM_445621.1"/>
</dbReference>
<dbReference type="SMR" id="Q6FVX3"/>
<dbReference type="FunCoup" id="Q6FVX3">
    <property type="interactions" value="402"/>
</dbReference>
<dbReference type="STRING" id="284593.Q6FVX3"/>
<dbReference type="EnsemblFungi" id="CAGL0D04818g-T">
    <property type="protein sequence ID" value="CAGL0D04818g-T-p1"/>
    <property type="gene ID" value="CAGL0D04818g"/>
</dbReference>
<dbReference type="KEGG" id="cgr:2887033"/>
<dbReference type="CGD" id="CAL0128151">
    <property type="gene designation" value="CAGL0D04818g"/>
</dbReference>
<dbReference type="VEuPathDB" id="FungiDB:CAGL0D04818g"/>
<dbReference type="eggNOG" id="KOG1793">
    <property type="taxonomic scope" value="Eukaryota"/>
</dbReference>
<dbReference type="HOGENOM" id="CLU_045275_0_0_1"/>
<dbReference type="InParanoid" id="Q6FVX3"/>
<dbReference type="OMA" id="TDYKFAP"/>
<dbReference type="Proteomes" id="UP000002428">
    <property type="component" value="Chromosome D"/>
</dbReference>
<dbReference type="GO" id="GO:0005665">
    <property type="term" value="C:RNA polymerase II, core complex"/>
    <property type="evidence" value="ECO:0007669"/>
    <property type="project" value="EnsemblFungi"/>
</dbReference>
<dbReference type="GO" id="GO:0003682">
    <property type="term" value="F:chromatin binding"/>
    <property type="evidence" value="ECO:0007669"/>
    <property type="project" value="EnsemblFungi"/>
</dbReference>
<dbReference type="GO" id="GO:0000993">
    <property type="term" value="F:RNA polymerase II complex binding"/>
    <property type="evidence" value="ECO:0007669"/>
    <property type="project" value="EnsemblFungi"/>
</dbReference>
<dbReference type="GO" id="GO:0061629">
    <property type="term" value="F:RNA polymerase II-specific DNA-binding transcription factor binding"/>
    <property type="evidence" value="ECO:0007669"/>
    <property type="project" value="EnsemblFungi"/>
</dbReference>
<dbReference type="GO" id="GO:0006334">
    <property type="term" value="P:nucleosome assembly"/>
    <property type="evidence" value="ECO:0007669"/>
    <property type="project" value="EnsemblFungi"/>
</dbReference>
<dbReference type="GO" id="GO:0016973">
    <property type="term" value="P:poly(A)+ mRNA export from nucleus"/>
    <property type="evidence" value="ECO:0007669"/>
    <property type="project" value="EnsemblFungi"/>
</dbReference>
<dbReference type="GO" id="GO:0006357">
    <property type="term" value="P:regulation of transcription by RNA polymerase II"/>
    <property type="evidence" value="ECO:0007669"/>
    <property type="project" value="EnsemblFungi"/>
</dbReference>
<dbReference type="GO" id="GO:0034243">
    <property type="term" value="P:regulation of transcription elongation by RNA polymerase II"/>
    <property type="evidence" value="ECO:0007669"/>
    <property type="project" value="EnsemblFungi"/>
</dbReference>
<dbReference type="FunFam" id="1.20.930.10:FF:000014">
    <property type="entry name" value="Transcription factor SPN1"/>
    <property type="match status" value="1"/>
</dbReference>
<dbReference type="Gene3D" id="1.20.5.170">
    <property type="match status" value="1"/>
</dbReference>
<dbReference type="Gene3D" id="1.20.930.10">
    <property type="entry name" value="Conserved domain common to transcription factors TFIIS, elongin A, CRSP70"/>
    <property type="match status" value="1"/>
</dbReference>
<dbReference type="InterPro" id="IPR051037">
    <property type="entry name" value="RNAPII_TF_IWS1"/>
</dbReference>
<dbReference type="InterPro" id="IPR035441">
    <property type="entry name" value="TFIIS/LEDGF_dom_sf"/>
</dbReference>
<dbReference type="InterPro" id="IPR017923">
    <property type="entry name" value="TFIIS_N"/>
</dbReference>
<dbReference type="PANTHER" id="PTHR46010">
    <property type="entry name" value="PROTEIN IWS1 HOMOLOG"/>
    <property type="match status" value="1"/>
</dbReference>
<dbReference type="PANTHER" id="PTHR46010:SF1">
    <property type="entry name" value="PROTEIN IWS1 HOMOLOG"/>
    <property type="match status" value="1"/>
</dbReference>
<dbReference type="Pfam" id="PF08711">
    <property type="entry name" value="Med26"/>
    <property type="match status" value="1"/>
</dbReference>
<dbReference type="SUPFAM" id="SSF47676">
    <property type="entry name" value="Conserved domain common to transcription factors TFIIS, elongin A, CRSP70"/>
    <property type="match status" value="1"/>
</dbReference>
<dbReference type="PROSITE" id="PS51319">
    <property type="entry name" value="TFIIS_N"/>
    <property type="match status" value="1"/>
</dbReference>
<evidence type="ECO:0000250" key="1"/>
<evidence type="ECO:0000255" key="2">
    <source>
        <dbReference type="PROSITE-ProRule" id="PRU00649"/>
    </source>
</evidence>
<evidence type="ECO:0000256" key="3">
    <source>
        <dbReference type="SAM" id="MobiDB-lite"/>
    </source>
</evidence>
<evidence type="ECO:0000305" key="4"/>
<comment type="function">
    <text evidence="1">Transcription factor involved in RNA polymerase II transcription regulation. May function in both SPT15/TBP post-recruitment and recruitment steps of transcription (By similarity).</text>
</comment>
<comment type="subcellular location">
    <subcellularLocation>
        <location evidence="2">Nucleus</location>
    </subcellularLocation>
</comment>
<comment type="similarity">
    <text evidence="4">Belongs to the IWS1 family.</text>
</comment>
<feature type="chain" id="PRO_0000083356" description="Transcription factor IWS1">
    <location>
        <begin position="1"/>
        <end position="382"/>
    </location>
</feature>
<feature type="domain" description="TFIIS N-terminal" evidence="2">
    <location>
        <begin position="189"/>
        <end position="266"/>
    </location>
</feature>
<feature type="region of interest" description="Disordered" evidence="3">
    <location>
        <begin position="1"/>
        <end position="87"/>
    </location>
</feature>
<feature type="region of interest" description="Disordered" evidence="3">
    <location>
        <begin position="289"/>
        <end position="360"/>
    </location>
</feature>
<feature type="compositionally biased region" description="Low complexity" evidence="3">
    <location>
        <begin position="9"/>
        <end position="47"/>
    </location>
</feature>
<feature type="compositionally biased region" description="Basic and acidic residues" evidence="3">
    <location>
        <begin position="51"/>
        <end position="60"/>
    </location>
</feature>
<feature type="compositionally biased region" description="Low complexity" evidence="3">
    <location>
        <begin position="302"/>
        <end position="314"/>
    </location>
</feature>
<feature type="compositionally biased region" description="Polar residues" evidence="3">
    <location>
        <begin position="344"/>
        <end position="360"/>
    </location>
</feature>
<gene>
    <name type="primary">IWS1</name>
    <name type="ordered locus">CAGL0D04818g</name>
</gene>
<reference key="1">
    <citation type="journal article" date="2004" name="Nature">
        <title>Genome evolution in yeasts.</title>
        <authorList>
            <person name="Dujon B."/>
            <person name="Sherman D."/>
            <person name="Fischer G."/>
            <person name="Durrens P."/>
            <person name="Casaregola S."/>
            <person name="Lafontaine I."/>
            <person name="de Montigny J."/>
            <person name="Marck C."/>
            <person name="Neuveglise C."/>
            <person name="Talla E."/>
            <person name="Goffard N."/>
            <person name="Frangeul L."/>
            <person name="Aigle M."/>
            <person name="Anthouard V."/>
            <person name="Babour A."/>
            <person name="Barbe V."/>
            <person name="Barnay S."/>
            <person name="Blanchin S."/>
            <person name="Beckerich J.-M."/>
            <person name="Beyne E."/>
            <person name="Bleykasten C."/>
            <person name="Boisrame A."/>
            <person name="Boyer J."/>
            <person name="Cattolico L."/>
            <person name="Confanioleri F."/>
            <person name="de Daruvar A."/>
            <person name="Despons L."/>
            <person name="Fabre E."/>
            <person name="Fairhead C."/>
            <person name="Ferry-Dumazet H."/>
            <person name="Groppi A."/>
            <person name="Hantraye F."/>
            <person name="Hennequin C."/>
            <person name="Jauniaux N."/>
            <person name="Joyet P."/>
            <person name="Kachouri R."/>
            <person name="Kerrest A."/>
            <person name="Koszul R."/>
            <person name="Lemaire M."/>
            <person name="Lesur I."/>
            <person name="Ma L."/>
            <person name="Muller H."/>
            <person name="Nicaud J.-M."/>
            <person name="Nikolski M."/>
            <person name="Oztas S."/>
            <person name="Ozier-Kalogeropoulos O."/>
            <person name="Pellenz S."/>
            <person name="Potier S."/>
            <person name="Richard G.-F."/>
            <person name="Straub M.-L."/>
            <person name="Suleau A."/>
            <person name="Swennen D."/>
            <person name="Tekaia F."/>
            <person name="Wesolowski-Louvel M."/>
            <person name="Westhof E."/>
            <person name="Wirth B."/>
            <person name="Zeniou-Meyer M."/>
            <person name="Zivanovic Y."/>
            <person name="Bolotin-Fukuhara M."/>
            <person name="Thierry A."/>
            <person name="Bouchier C."/>
            <person name="Caudron B."/>
            <person name="Scarpelli C."/>
            <person name="Gaillardin C."/>
            <person name="Weissenbach J."/>
            <person name="Wincker P."/>
            <person name="Souciet J.-L."/>
        </authorList>
    </citation>
    <scope>NUCLEOTIDE SEQUENCE [LARGE SCALE GENOMIC DNA]</scope>
    <source>
        <strain>ATCC 2001 / BCRC 20586 / JCM 3761 / NBRC 0622 / NRRL Y-65 / CBS 138</strain>
    </source>
</reference>
<organism>
    <name type="scientific">Candida glabrata (strain ATCC 2001 / BCRC 20586 / JCM 3761 / NBRC 0622 / NRRL Y-65 / CBS 138)</name>
    <name type="common">Yeast</name>
    <name type="synonym">Nakaseomyces glabratus</name>
    <dbReference type="NCBI Taxonomy" id="284593"/>
    <lineage>
        <taxon>Eukaryota</taxon>
        <taxon>Fungi</taxon>
        <taxon>Dikarya</taxon>
        <taxon>Ascomycota</taxon>
        <taxon>Saccharomycotina</taxon>
        <taxon>Saccharomycetes</taxon>
        <taxon>Saccharomycetales</taxon>
        <taxon>Saccharomycetaceae</taxon>
        <taxon>Nakaseomyces</taxon>
    </lineage>
</organism>
<name>IWS1_CANGA</name>
<keyword id="KW-0539">Nucleus</keyword>
<keyword id="KW-1185">Reference proteome</keyword>
<keyword id="KW-0804">Transcription</keyword>
<keyword id="KW-0805">Transcription regulation</keyword>
<protein>
    <recommendedName>
        <fullName>Transcription factor IWS1</fullName>
    </recommendedName>
</protein>
<proteinExistence type="inferred from homology"/>